<name>APAH_SHEB9</name>
<accession>A9L436</accession>
<organism>
    <name type="scientific">Shewanella baltica (strain OS195)</name>
    <dbReference type="NCBI Taxonomy" id="399599"/>
    <lineage>
        <taxon>Bacteria</taxon>
        <taxon>Pseudomonadati</taxon>
        <taxon>Pseudomonadota</taxon>
        <taxon>Gammaproteobacteria</taxon>
        <taxon>Alteromonadales</taxon>
        <taxon>Shewanellaceae</taxon>
        <taxon>Shewanella</taxon>
    </lineage>
</organism>
<reference key="1">
    <citation type="submission" date="2007-11" db="EMBL/GenBank/DDBJ databases">
        <title>Complete sequence of chromosome of Shewanella baltica OS195.</title>
        <authorList>
            <consortium name="US DOE Joint Genome Institute"/>
            <person name="Copeland A."/>
            <person name="Lucas S."/>
            <person name="Lapidus A."/>
            <person name="Barry K."/>
            <person name="Glavina del Rio T."/>
            <person name="Dalin E."/>
            <person name="Tice H."/>
            <person name="Pitluck S."/>
            <person name="Chain P."/>
            <person name="Malfatti S."/>
            <person name="Shin M."/>
            <person name="Vergez L."/>
            <person name="Schmutz J."/>
            <person name="Larimer F."/>
            <person name="Land M."/>
            <person name="Hauser L."/>
            <person name="Kyrpides N."/>
            <person name="Kim E."/>
            <person name="Brettar I."/>
            <person name="Rodrigues J."/>
            <person name="Konstantinidis K."/>
            <person name="Klappenbach J."/>
            <person name="Hofle M."/>
            <person name="Tiedje J."/>
            <person name="Richardson P."/>
        </authorList>
    </citation>
    <scope>NUCLEOTIDE SEQUENCE [LARGE SCALE GENOMIC DNA]</scope>
    <source>
        <strain>OS195</strain>
    </source>
</reference>
<feature type="chain" id="PRO_1000077720" description="Bis(5'-nucleosyl)-tetraphosphatase, symmetrical">
    <location>
        <begin position="1"/>
        <end position="274"/>
    </location>
</feature>
<dbReference type="EC" id="3.6.1.41" evidence="1"/>
<dbReference type="EMBL" id="CP000891">
    <property type="protein sequence ID" value="ABX48253.1"/>
    <property type="molecule type" value="Genomic_DNA"/>
</dbReference>
<dbReference type="RefSeq" id="WP_012196754.1">
    <property type="nucleotide sequence ID" value="NC_009997.1"/>
</dbReference>
<dbReference type="SMR" id="A9L436"/>
<dbReference type="KEGG" id="sbn:Sbal195_1077"/>
<dbReference type="HOGENOM" id="CLU_056184_2_0_6"/>
<dbReference type="Proteomes" id="UP000000770">
    <property type="component" value="Chromosome"/>
</dbReference>
<dbReference type="GO" id="GO:0005737">
    <property type="term" value="C:cytoplasm"/>
    <property type="evidence" value="ECO:0007669"/>
    <property type="project" value="TreeGrafter"/>
</dbReference>
<dbReference type="GO" id="GO:0008803">
    <property type="term" value="F:bis(5'-nucleosyl)-tetraphosphatase (symmetrical) activity"/>
    <property type="evidence" value="ECO:0007669"/>
    <property type="project" value="UniProtKB-UniRule"/>
</dbReference>
<dbReference type="GO" id="GO:0016791">
    <property type="term" value="F:phosphatase activity"/>
    <property type="evidence" value="ECO:0007669"/>
    <property type="project" value="TreeGrafter"/>
</dbReference>
<dbReference type="GO" id="GO:0110154">
    <property type="term" value="P:RNA decapping"/>
    <property type="evidence" value="ECO:0007669"/>
    <property type="project" value="TreeGrafter"/>
</dbReference>
<dbReference type="CDD" id="cd07422">
    <property type="entry name" value="MPP_ApaH"/>
    <property type="match status" value="1"/>
</dbReference>
<dbReference type="Gene3D" id="3.60.21.10">
    <property type="match status" value="1"/>
</dbReference>
<dbReference type="HAMAP" id="MF_00199">
    <property type="entry name" value="ApaH"/>
    <property type="match status" value="1"/>
</dbReference>
<dbReference type="InterPro" id="IPR050126">
    <property type="entry name" value="Ap4A_hydrolase"/>
</dbReference>
<dbReference type="InterPro" id="IPR004617">
    <property type="entry name" value="ApaH"/>
</dbReference>
<dbReference type="InterPro" id="IPR004843">
    <property type="entry name" value="Calcineurin-like_PHP_ApaH"/>
</dbReference>
<dbReference type="InterPro" id="IPR029052">
    <property type="entry name" value="Metallo-depent_PP-like"/>
</dbReference>
<dbReference type="NCBIfam" id="TIGR00668">
    <property type="entry name" value="apaH"/>
    <property type="match status" value="1"/>
</dbReference>
<dbReference type="NCBIfam" id="NF001204">
    <property type="entry name" value="PRK00166.1"/>
    <property type="match status" value="1"/>
</dbReference>
<dbReference type="PANTHER" id="PTHR42850:SF11">
    <property type="entry name" value="BIS(5'-NUCLEOSYL)-TETRAPHOSPHATASE [SYMMETRICAL]"/>
    <property type="match status" value="1"/>
</dbReference>
<dbReference type="PANTHER" id="PTHR42850">
    <property type="entry name" value="METALLOPHOSPHOESTERASE"/>
    <property type="match status" value="1"/>
</dbReference>
<dbReference type="Pfam" id="PF00149">
    <property type="entry name" value="Metallophos"/>
    <property type="match status" value="1"/>
</dbReference>
<dbReference type="PIRSF" id="PIRSF000903">
    <property type="entry name" value="B5n-ttraPtase_sm"/>
    <property type="match status" value="1"/>
</dbReference>
<dbReference type="SUPFAM" id="SSF56300">
    <property type="entry name" value="Metallo-dependent phosphatases"/>
    <property type="match status" value="1"/>
</dbReference>
<gene>
    <name evidence="1" type="primary">apaH</name>
    <name type="ordered locus">Sbal195_1077</name>
</gene>
<sequence length="274" mass="31128">MAHYFVGDIQGCFAELQKLLAKVDFNPSRDELWAVGDLVARGPDSLATLRFFRSLGDSAKTVLGNHDLHLMALHGKLKRAKPSDNLTEILESPDISASIDWLRQQPLMRELPEHQLIMSHAGVPPQWSLEVLREEAALVSCALKQDDYLEALISQMYSDSAEQWDPSAIGIERLRYCINALTRMRYLYVDGRLDFDCKQPPENCTNPQLKPWFEFASPLRQSHTLVFGHWAALMGNVGDSKLKALDTGCCWGEHLTLWHLEKDQKITQKKLKKS</sequence>
<evidence type="ECO:0000255" key="1">
    <source>
        <dbReference type="HAMAP-Rule" id="MF_00199"/>
    </source>
</evidence>
<protein>
    <recommendedName>
        <fullName evidence="1">Bis(5'-nucleosyl)-tetraphosphatase, symmetrical</fullName>
        <ecNumber evidence="1">3.6.1.41</ecNumber>
    </recommendedName>
    <alternativeName>
        <fullName evidence="1">Ap4A hydrolase</fullName>
    </alternativeName>
    <alternativeName>
        <fullName evidence="1">Diadenosine 5',5'''-P1,P4-tetraphosphate pyrophosphohydrolase</fullName>
    </alternativeName>
    <alternativeName>
        <fullName evidence="1">Diadenosine tetraphosphatase</fullName>
    </alternativeName>
</protein>
<keyword id="KW-0378">Hydrolase</keyword>
<proteinExistence type="inferred from homology"/>
<comment type="function">
    <text evidence="1">Hydrolyzes diadenosine 5',5'''-P1,P4-tetraphosphate to yield ADP.</text>
</comment>
<comment type="catalytic activity">
    <reaction evidence="1">
        <text>P(1),P(4)-bis(5'-adenosyl) tetraphosphate + H2O = 2 ADP + 2 H(+)</text>
        <dbReference type="Rhea" id="RHEA:24252"/>
        <dbReference type="ChEBI" id="CHEBI:15377"/>
        <dbReference type="ChEBI" id="CHEBI:15378"/>
        <dbReference type="ChEBI" id="CHEBI:58141"/>
        <dbReference type="ChEBI" id="CHEBI:456216"/>
        <dbReference type="EC" id="3.6.1.41"/>
    </reaction>
</comment>
<comment type="similarity">
    <text evidence="1">Belongs to the Ap4A hydrolase family.</text>
</comment>